<feature type="chain" id="PRO_0000178947" description="UDP-N-acetylglucosamine 1-carboxyvinyltransferase">
    <location>
        <begin position="1"/>
        <end position="425"/>
    </location>
</feature>
<feature type="active site" description="Proton donor" evidence="1">
    <location>
        <position position="117"/>
    </location>
</feature>
<feature type="binding site" evidence="1">
    <location>
        <begin position="22"/>
        <end position="23"/>
    </location>
    <ligand>
        <name>phosphoenolpyruvate</name>
        <dbReference type="ChEBI" id="CHEBI:58702"/>
    </ligand>
</feature>
<feature type="binding site" evidence="1">
    <location>
        <position position="93"/>
    </location>
    <ligand>
        <name>UDP-N-acetyl-alpha-D-glucosamine</name>
        <dbReference type="ChEBI" id="CHEBI:57705"/>
    </ligand>
</feature>
<feature type="binding site" evidence="1">
    <location>
        <position position="312"/>
    </location>
    <ligand>
        <name>UDP-N-acetyl-alpha-D-glucosamine</name>
        <dbReference type="ChEBI" id="CHEBI:57705"/>
    </ligand>
</feature>
<feature type="binding site" evidence="1">
    <location>
        <position position="334"/>
    </location>
    <ligand>
        <name>UDP-N-acetyl-alpha-D-glucosamine</name>
        <dbReference type="ChEBI" id="CHEBI:57705"/>
    </ligand>
</feature>
<proteinExistence type="inferred from homology"/>
<dbReference type="EC" id="2.5.1.7" evidence="1"/>
<dbReference type="EMBL" id="X54111">
    <property type="protein sequence ID" value="CAA38047.1"/>
    <property type="molecule type" value="Genomic_DNA"/>
</dbReference>
<dbReference type="EMBL" id="AE000520">
    <property type="protein sequence ID" value="AAC65025.1"/>
    <property type="molecule type" value="Genomic_DNA"/>
</dbReference>
<dbReference type="PIR" id="G71374">
    <property type="entry name" value="G71374"/>
</dbReference>
<dbReference type="RefSeq" id="WP_010881478.1">
    <property type="nucleotide sequence ID" value="NC_021490.2"/>
</dbReference>
<dbReference type="SMR" id="O54312"/>
<dbReference type="IntAct" id="O54312">
    <property type="interactions" value="3"/>
</dbReference>
<dbReference type="STRING" id="243276.TP_0029"/>
<dbReference type="EnsemblBacteria" id="AAC65025">
    <property type="protein sequence ID" value="AAC65025"/>
    <property type="gene ID" value="TP_0029"/>
</dbReference>
<dbReference type="GeneID" id="93875827"/>
<dbReference type="KEGG" id="tpa:TP_0029"/>
<dbReference type="KEGG" id="tpw:TPANIC_0029"/>
<dbReference type="eggNOG" id="COG0766">
    <property type="taxonomic scope" value="Bacteria"/>
</dbReference>
<dbReference type="HOGENOM" id="CLU_027387_0_1_12"/>
<dbReference type="UniPathway" id="UPA00219"/>
<dbReference type="Proteomes" id="UP000000811">
    <property type="component" value="Chromosome"/>
</dbReference>
<dbReference type="GO" id="GO:0005737">
    <property type="term" value="C:cytoplasm"/>
    <property type="evidence" value="ECO:0007669"/>
    <property type="project" value="UniProtKB-SubCell"/>
</dbReference>
<dbReference type="GO" id="GO:0008760">
    <property type="term" value="F:UDP-N-acetylglucosamine 1-carboxyvinyltransferase activity"/>
    <property type="evidence" value="ECO:0007669"/>
    <property type="project" value="UniProtKB-UniRule"/>
</dbReference>
<dbReference type="GO" id="GO:0051301">
    <property type="term" value="P:cell division"/>
    <property type="evidence" value="ECO:0007669"/>
    <property type="project" value="UniProtKB-KW"/>
</dbReference>
<dbReference type="GO" id="GO:0071555">
    <property type="term" value="P:cell wall organization"/>
    <property type="evidence" value="ECO:0007669"/>
    <property type="project" value="UniProtKB-KW"/>
</dbReference>
<dbReference type="GO" id="GO:0009252">
    <property type="term" value="P:peptidoglycan biosynthetic process"/>
    <property type="evidence" value="ECO:0007669"/>
    <property type="project" value="UniProtKB-UniRule"/>
</dbReference>
<dbReference type="GO" id="GO:0008360">
    <property type="term" value="P:regulation of cell shape"/>
    <property type="evidence" value="ECO:0007669"/>
    <property type="project" value="UniProtKB-KW"/>
</dbReference>
<dbReference type="GO" id="GO:0019277">
    <property type="term" value="P:UDP-N-acetylgalactosamine biosynthetic process"/>
    <property type="evidence" value="ECO:0007669"/>
    <property type="project" value="InterPro"/>
</dbReference>
<dbReference type="CDD" id="cd01555">
    <property type="entry name" value="UdpNAET"/>
    <property type="match status" value="1"/>
</dbReference>
<dbReference type="Gene3D" id="3.65.10.10">
    <property type="entry name" value="Enolpyruvate transferase domain"/>
    <property type="match status" value="2"/>
</dbReference>
<dbReference type="HAMAP" id="MF_00111">
    <property type="entry name" value="MurA"/>
    <property type="match status" value="1"/>
</dbReference>
<dbReference type="InterPro" id="IPR001986">
    <property type="entry name" value="Enolpyruvate_Tfrase_dom"/>
</dbReference>
<dbReference type="InterPro" id="IPR036968">
    <property type="entry name" value="Enolpyruvate_Tfrase_sf"/>
</dbReference>
<dbReference type="InterPro" id="IPR050068">
    <property type="entry name" value="MurA_subfamily"/>
</dbReference>
<dbReference type="InterPro" id="IPR013792">
    <property type="entry name" value="RNA3'P_cycl/enolpyr_Trfase_a/b"/>
</dbReference>
<dbReference type="InterPro" id="IPR005750">
    <property type="entry name" value="UDP_GlcNAc_COvinyl_MurA"/>
</dbReference>
<dbReference type="NCBIfam" id="TIGR01072">
    <property type="entry name" value="murA"/>
    <property type="match status" value="1"/>
</dbReference>
<dbReference type="NCBIfam" id="NF006873">
    <property type="entry name" value="PRK09369.1"/>
    <property type="match status" value="1"/>
</dbReference>
<dbReference type="PANTHER" id="PTHR43783">
    <property type="entry name" value="UDP-N-ACETYLGLUCOSAMINE 1-CARBOXYVINYLTRANSFERASE"/>
    <property type="match status" value="1"/>
</dbReference>
<dbReference type="PANTHER" id="PTHR43783:SF1">
    <property type="entry name" value="UDP-N-ACETYLGLUCOSAMINE 1-CARBOXYVINYLTRANSFERASE"/>
    <property type="match status" value="1"/>
</dbReference>
<dbReference type="Pfam" id="PF00275">
    <property type="entry name" value="EPSP_synthase"/>
    <property type="match status" value="1"/>
</dbReference>
<dbReference type="SUPFAM" id="SSF55205">
    <property type="entry name" value="EPT/RTPC-like"/>
    <property type="match status" value="1"/>
</dbReference>
<organism>
    <name type="scientific">Treponema pallidum (strain Nichols)</name>
    <dbReference type="NCBI Taxonomy" id="243276"/>
    <lineage>
        <taxon>Bacteria</taxon>
        <taxon>Pseudomonadati</taxon>
        <taxon>Spirochaetota</taxon>
        <taxon>Spirochaetia</taxon>
        <taxon>Spirochaetales</taxon>
        <taxon>Treponemataceae</taxon>
        <taxon>Treponema</taxon>
    </lineage>
</organism>
<sequence length="425" mass="45542">MSCYRVEGGFPVSGCIRVCGNKNAALPCIAAAVLTQEPVLLQNVPDIEDVAVMLTIFRAFGGSVERRGNHEYMLHLPQLQTCEVPCEAAQKVRASILFAGPLLARGRKAVLPPPGGDVIGRRRLDTHFLALAALGAQVRLDGVFTFSANKLVGCDVFLDEASVTATENVLMASVLAEGVTVITNAASEPHVQDLCHLLNAMGARVSGIGSNVLTIEGVSALHGTTYTLGADFMEVGSLIGLAVVTRGALTISDVNVRDLRPLGFAFKKLGVIWSEQEHAVSVSASQDLRVNYDFGGMIPKIDDGPWPAFPPDLTSIMTVVATQVEGVILIHEKMFESRMFFVDKLITMGARIILCDPHRALVSGPSALHGSDLVSPDVRAGMAMVLAACCARGVSIIRNVYQIERGYERLVERLQAIGVRIWKEG</sequence>
<name>MURA_TREPA</name>
<evidence type="ECO:0000255" key="1">
    <source>
        <dbReference type="HAMAP-Rule" id="MF_00111"/>
    </source>
</evidence>
<accession>O54312</accession>
<comment type="function">
    <text evidence="1">Cell wall formation. Adds enolpyruvyl to UDP-N-acetylglucosamine.</text>
</comment>
<comment type="catalytic activity">
    <reaction evidence="1">
        <text>phosphoenolpyruvate + UDP-N-acetyl-alpha-D-glucosamine = UDP-N-acetyl-3-O-(1-carboxyvinyl)-alpha-D-glucosamine + phosphate</text>
        <dbReference type="Rhea" id="RHEA:18681"/>
        <dbReference type="ChEBI" id="CHEBI:43474"/>
        <dbReference type="ChEBI" id="CHEBI:57705"/>
        <dbReference type="ChEBI" id="CHEBI:58702"/>
        <dbReference type="ChEBI" id="CHEBI:68483"/>
        <dbReference type="EC" id="2.5.1.7"/>
    </reaction>
</comment>
<comment type="pathway">
    <text evidence="1">Cell wall biogenesis; peptidoglycan biosynthesis.</text>
</comment>
<comment type="subcellular location">
    <subcellularLocation>
        <location evidence="1">Cytoplasm</location>
    </subcellularLocation>
</comment>
<comment type="similarity">
    <text evidence="1">Belongs to the EPSP synthase family. MurA subfamily.</text>
</comment>
<protein>
    <recommendedName>
        <fullName evidence="1">UDP-N-acetylglucosamine 1-carboxyvinyltransferase</fullName>
        <ecNumber evidence="1">2.5.1.7</ecNumber>
    </recommendedName>
    <alternativeName>
        <fullName evidence="1">Enoylpyruvate transferase</fullName>
    </alternativeName>
    <alternativeName>
        <fullName evidence="1">UDP-N-acetylglucosamine enolpyruvyl transferase</fullName>
        <shortName evidence="1">EPT</shortName>
    </alternativeName>
</protein>
<reference key="1">
    <citation type="submission" date="1990-07" db="EMBL/GenBank/DDBJ databases">
        <authorList>
            <person name="Hindersson P."/>
        </authorList>
    </citation>
    <scope>NUCLEOTIDE SEQUENCE [GENOMIC DNA]</scope>
    <source>
        <strain>Nichols</strain>
    </source>
</reference>
<reference key="2">
    <citation type="journal article" date="1998" name="Science">
        <title>Complete genome sequence of Treponema pallidum, the syphilis spirochete.</title>
        <authorList>
            <person name="Fraser C.M."/>
            <person name="Norris S.J."/>
            <person name="Weinstock G.M."/>
            <person name="White O."/>
            <person name="Sutton G.G."/>
            <person name="Dodson R.J."/>
            <person name="Gwinn M.L."/>
            <person name="Hickey E.K."/>
            <person name="Clayton R.A."/>
            <person name="Ketchum K.A."/>
            <person name="Sodergren E."/>
            <person name="Hardham J.M."/>
            <person name="McLeod M.P."/>
            <person name="Salzberg S.L."/>
            <person name="Peterson J.D."/>
            <person name="Khalak H.G."/>
            <person name="Richardson D.L."/>
            <person name="Howell J.K."/>
            <person name="Chidambaram M."/>
            <person name="Utterback T.R."/>
            <person name="McDonald L.A."/>
            <person name="Artiach P."/>
            <person name="Bowman C."/>
            <person name="Cotton M.D."/>
            <person name="Fujii C."/>
            <person name="Garland S.A."/>
            <person name="Hatch B."/>
            <person name="Horst K."/>
            <person name="Roberts K.M."/>
            <person name="Sandusky M."/>
            <person name="Weidman J.F."/>
            <person name="Smith H.O."/>
            <person name="Venter J.C."/>
        </authorList>
    </citation>
    <scope>NUCLEOTIDE SEQUENCE [LARGE SCALE GENOMIC DNA]</scope>
    <source>
        <strain>Nichols</strain>
    </source>
</reference>
<gene>
    <name evidence="1" type="primary">murA</name>
    <name type="ordered locus">TP_0029</name>
</gene>
<keyword id="KW-0131">Cell cycle</keyword>
<keyword id="KW-0132">Cell division</keyword>
<keyword id="KW-0133">Cell shape</keyword>
<keyword id="KW-0961">Cell wall biogenesis/degradation</keyword>
<keyword id="KW-0963">Cytoplasm</keyword>
<keyword id="KW-0573">Peptidoglycan synthesis</keyword>
<keyword id="KW-1185">Reference proteome</keyword>
<keyword id="KW-0808">Transferase</keyword>